<comment type="similarity">
    <text evidence="1">Belongs to the bacterial ribosomal protein bS21 family.</text>
</comment>
<keyword id="KW-1185">Reference proteome</keyword>
<keyword id="KW-0687">Ribonucleoprotein</keyword>
<keyword id="KW-0689">Ribosomal protein</keyword>
<accession>Q46IX8</accession>
<reference key="1">
    <citation type="journal article" date="2007" name="PLoS Genet.">
        <title>Patterns and implications of gene gain and loss in the evolution of Prochlorococcus.</title>
        <authorList>
            <person name="Kettler G.C."/>
            <person name="Martiny A.C."/>
            <person name="Huang K."/>
            <person name="Zucker J."/>
            <person name="Coleman M.L."/>
            <person name="Rodrigue S."/>
            <person name="Chen F."/>
            <person name="Lapidus A."/>
            <person name="Ferriera S."/>
            <person name="Johnson J."/>
            <person name="Steglich C."/>
            <person name="Church G.M."/>
            <person name="Richardson P."/>
            <person name="Chisholm S.W."/>
        </authorList>
    </citation>
    <scope>NUCLEOTIDE SEQUENCE [LARGE SCALE GENOMIC DNA]</scope>
    <source>
        <strain>NATL2A</strain>
    </source>
</reference>
<evidence type="ECO:0000255" key="1">
    <source>
        <dbReference type="HAMAP-Rule" id="MF_00358"/>
    </source>
</evidence>
<evidence type="ECO:0000256" key="2">
    <source>
        <dbReference type="SAM" id="MobiDB-lite"/>
    </source>
</evidence>
<evidence type="ECO:0000305" key="3"/>
<gene>
    <name evidence="1" type="primary">rpsU</name>
    <name evidence="1" type="synonym">rps21</name>
    <name type="ordered locus">PMN2A_1060</name>
</gene>
<sequence length="58" mass="7033">MTQVTVGENEGIESALRRFKRQVSKAGIFGELKRLRHHETPVEKYKRKLQQRRRSRRR</sequence>
<proteinExistence type="inferred from homology"/>
<name>RS21_PROMT</name>
<organism>
    <name type="scientific">Prochlorococcus marinus (strain NATL2A)</name>
    <dbReference type="NCBI Taxonomy" id="59920"/>
    <lineage>
        <taxon>Bacteria</taxon>
        <taxon>Bacillati</taxon>
        <taxon>Cyanobacteriota</taxon>
        <taxon>Cyanophyceae</taxon>
        <taxon>Synechococcales</taxon>
        <taxon>Prochlorococcaceae</taxon>
        <taxon>Prochlorococcus</taxon>
    </lineage>
</organism>
<dbReference type="EMBL" id="CP000095">
    <property type="protein sequence ID" value="AAZ58550.1"/>
    <property type="molecule type" value="Genomic_DNA"/>
</dbReference>
<dbReference type="RefSeq" id="WP_011295405.1">
    <property type="nucleotide sequence ID" value="NC_007335.2"/>
</dbReference>
<dbReference type="SMR" id="Q46IX8"/>
<dbReference type="STRING" id="59920.PMN2A_1060"/>
<dbReference type="KEGG" id="pmn:PMN2A_1060"/>
<dbReference type="HOGENOM" id="CLU_159258_3_1_3"/>
<dbReference type="OrthoDB" id="9799244at2"/>
<dbReference type="PhylomeDB" id="Q46IX8"/>
<dbReference type="Proteomes" id="UP000002535">
    <property type="component" value="Chromosome"/>
</dbReference>
<dbReference type="GO" id="GO:1990904">
    <property type="term" value="C:ribonucleoprotein complex"/>
    <property type="evidence" value="ECO:0007669"/>
    <property type="project" value="UniProtKB-KW"/>
</dbReference>
<dbReference type="GO" id="GO:0005840">
    <property type="term" value="C:ribosome"/>
    <property type="evidence" value="ECO:0007669"/>
    <property type="project" value="UniProtKB-KW"/>
</dbReference>
<dbReference type="GO" id="GO:0003735">
    <property type="term" value="F:structural constituent of ribosome"/>
    <property type="evidence" value="ECO:0007669"/>
    <property type="project" value="InterPro"/>
</dbReference>
<dbReference type="GO" id="GO:0006412">
    <property type="term" value="P:translation"/>
    <property type="evidence" value="ECO:0007669"/>
    <property type="project" value="UniProtKB-UniRule"/>
</dbReference>
<dbReference type="Gene3D" id="1.20.5.1150">
    <property type="entry name" value="Ribosomal protein S8"/>
    <property type="match status" value="1"/>
</dbReference>
<dbReference type="HAMAP" id="MF_00358">
    <property type="entry name" value="Ribosomal_bS21"/>
    <property type="match status" value="1"/>
</dbReference>
<dbReference type="InterPro" id="IPR001911">
    <property type="entry name" value="Ribosomal_bS21"/>
</dbReference>
<dbReference type="InterPro" id="IPR018278">
    <property type="entry name" value="Ribosomal_bS21_CS"/>
</dbReference>
<dbReference type="InterPro" id="IPR038380">
    <property type="entry name" value="Ribosomal_bS21_sf"/>
</dbReference>
<dbReference type="NCBIfam" id="TIGR00030">
    <property type="entry name" value="S21p"/>
    <property type="match status" value="1"/>
</dbReference>
<dbReference type="PANTHER" id="PTHR21109">
    <property type="entry name" value="MITOCHONDRIAL 28S RIBOSOMAL PROTEIN S21"/>
    <property type="match status" value="1"/>
</dbReference>
<dbReference type="PANTHER" id="PTHR21109:SF0">
    <property type="entry name" value="SMALL RIBOSOMAL SUBUNIT PROTEIN BS21M"/>
    <property type="match status" value="1"/>
</dbReference>
<dbReference type="Pfam" id="PF01165">
    <property type="entry name" value="Ribosomal_S21"/>
    <property type="match status" value="1"/>
</dbReference>
<dbReference type="PRINTS" id="PR00976">
    <property type="entry name" value="RIBOSOMALS21"/>
</dbReference>
<dbReference type="PROSITE" id="PS01181">
    <property type="entry name" value="RIBOSOMAL_S21"/>
    <property type="match status" value="1"/>
</dbReference>
<feature type="chain" id="PRO_0000266730" description="Small ribosomal subunit protein bS21">
    <location>
        <begin position="1"/>
        <end position="58"/>
    </location>
</feature>
<feature type="region of interest" description="Disordered" evidence="2">
    <location>
        <begin position="36"/>
        <end position="58"/>
    </location>
</feature>
<feature type="compositionally biased region" description="Basic residues" evidence="2">
    <location>
        <begin position="45"/>
        <end position="58"/>
    </location>
</feature>
<protein>
    <recommendedName>
        <fullName evidence="1">Small ribosomal subunit protein bS21</fullName>
    </recommendedName>
    <alternativeName>
        <fullName evidence="3">30S ribosomal protein S21</fullName>
    </alternativeName>
</protein>